<protein>
    <recommendedName>
        <fullName>Laminin-like protein lam-2</fullName>
    </recommendedName>
</protein>
<proteinExistence type="evidence at protein level"/>
<sequence length="1633" mass="181213">MTSILWLFSLAVLWHMGQPQPAELYPSVDPNHFGADGNPCYDRATRQPQRCVPDFVNAAFNLEVQVTNTCGTKRPTKFCVQSGHTGQRSVCETCDDRHEGFSHPAKYLTDFNVGNNETWWQSDTMQEGQQYPTTTNLTLVLGKSFDITYVRLKFISPRPESFTIYKKTHTDSEWEPWQFYSGSCRATYGLSDRAPILPGNEATAQCTKEFSDISPITGGNIAFSTLEGRPSAHAFEESEVLQKWVTASAIRISLNRMNTFGDEVFKDPQVLRSYYYAISDFAVGGRCKCNGHASECVGSSSVDGENRLVCRCEHNTQGADCNECLPFYNDRPWRSGTSVEANECIACNCSQLSNRCYFDQQLFEETGHGGHCIDCQGNTQGVHCEQCIANHWRRPGENYCVACGCNEIGSLSTQCDNEGKCQCKPGVTGRFCDQCLDGFYDFSTNGCKNCGCETSGSLNNQPRCDSSSGSCSCKLNVEGRQCDKCKPGYFDLSTENQFGCTPCFCFGHSSICNTADGYFAMNVSSVFDQDKQKWAGQNRIGLQDTQWAELDKAVAVSDTDNSPVYFVAPEQFLGDQRSSYNQDLVFTLKVAKHVTNQDVKDIIIVGADRQELSTSITAQGNPFPTTEAQTYRFRVHADPYFGWYPRINELDFIGILSNITAIKIRGTYSYKDIGYLSNVNLGTAGVAPSAANPKQATWIEHCECLPGFVGQFCESCESGFRRETKFGGPFNHCIKCDCHNHSNSCEAESGSCICEHNTAGDTCERCARGYYGDALQGTEEDCQKCPCPNDGPCILHADGDVICTECPNGYTGRRCDECSDGYFGNPKDGTECVECACSGNTDPNSIGNCDKITGECKKCIFNTHGFNCENCKPGYWGDALIEPKGNCQSCGCFAAGTRRPNNDYTLLECNQQDGQCDCLPNVIGIQCDQCAHGFYNITSGLGCQECNCDPLGSEGNTCDVNTGQCQCKPGVTGQRCDRCADYHFGFSANGCQPCDCEYIGSENQQCDVNSGQCLCKENVEGRRCDQCAENRYGITQGCLPCDDCYTLIQSRVNVFREKVKSLDNTLQEIIENPAPVNDTKFDEKVKETSRAASEVWEAVKQKTKEGGGTIKTKSKAIKDEIVAALEKLTSIDESVAQAKVGADAAENDMKRWEIIIENARREIENVLHYLETEGEERAQIAYNASQKYGEQSKRMSELASGTREEAEKHLKQASEIEQLSEQAIANATQANKEASDAIYGGEQISKQIAELKEKQNQLNESIHRTLDLAEEQKKSADEANNLAAVSLTNVEAVKIPSVDPKELRNDVAGVLEESENLVDSSVKENSANDELFDEVNRSVADARNELQSSQDQQRVSDQLMLELEKSRERIVDSVSTADKTLKDAEAALQVLEEFGAKIEKSRNDAVAEFAGVEGINQRLDDIIDAQDKRRNSLPIDKQFVIDYRKSADVLLNETHALADRYKDIIHSDVDTRDSTEAVQYDIEQLMEELTDSNENLQYYKKQAEDDKQMATEAVRKATLAKNSAIEANATILAEEDEIKKIINSLDTMEEVNNAELDELEEEIDRLDQLLAQAQLAKEVPTYQQYRADEDVKVAQLKNDISELQKEVLNLEEIRDNLPTKCFNVINLEQEGQK</sequence>
<gene>
    <name type="primary">lam-2</name>
    <name type="ORF">C54D1.5</name>
</gene>
<feature type="signal peptide" evidence="1">
    <location>
        <begin position="1"/>
        <end position="19"/>
    </location>
</feature>
<feature type="chain" id="PRO_0000017099" description="Laminin-like protein lam-2">
    <location>
        <begin position="20"/>
        <end position="1633"/>
    </location>
</feature>
<feature type="domain" description="Laminin N-terminal" evidence="4">
    <location>
        <begin position="47"/>
        <end position="286"/>
    </location>
</feature>
<feature type="domain" description="Laminin EGF-like 1" evidence="3">
    <location>
        <begin position="287"/>
        <end position="346"/>
    </location>
</feature>
<feature type="domain" description="Laminin EGF-like 2" evidence="3">
    <location>
        <begin position="347"/>
        <end position="402"/>
    </location>
</feature>
<feature type="domain" description="Laminin EGF-like 3" evidence="3">
    <location>
        <begin position="403"/>
        <end position="449"/>
    </location>
</feature>
<feature type="domain" description="Laminin EGF-like 4" evidence="3">
    <location>
        <begin position="450"/>
        <end position="502"/>
    </location>
</feature>
<feature type="domain" description="Laminin EGF-like 5; first part" evidence="3">
    <location>
        <begin position="503"/>
        <end position="512"/>
    </location>
</feature>
<feature type="domain" description="Laminin IV type A" evidence="2">
    <location>
        <begin position="529"/>
        <end position="701"/>
    </location>
</feature>
<feature type="domain" description="Laminin EGF-like 5; second part" evidence="3">
    <location>
        <begin position="702"/>
        <end position="747"/>
    </location>
</feature>
<feature type="domain" description="Laminin EGF-like 6; truncated" evidence="3">
    <location>
        <begin position="752"/>
        <end position="784"/>
    </location>
</feature>
<feature type="domain" description="Laminin EGF-like 7" evidence="3">
    <location>
        <begin position="785"/>
        <end position="834"/>
    </location>
</feature>
<feature type="domain" description="Laminin EGF-like 8" evidence="3">
    <location>
        <begin position="835"/>
        <end position="889"/>
    </location>
</feature>
<feature type="domain" description="Laminin EGF-like 9" evidence="3">
    <location>
        <begin position="890"/>
        <end position="945"/>
    </location>
</feature>
<feature type="domain" description="Laminin EGF-like 10" evidence="3">
    <location>
        <begin position="946"/>
        <end position="993"/>
    </location>
</feature>
<feature type="domain" description="Laminin EGF-like 11" evidence="3">
    <location>
        <begin position="994"/>
        <end position="1040"/>
    </location>
</feature>
<feature type="glycosylation site" description="N-linked (GlcNAc...) asparagine" evidence="5">
    <location>
        <position position="116"/>
    </location>
</feature>
<feature type="glycosylation site" description="N-linked (GlcNAc...) asparagine" evidence="1">
    <location>
        <position position="136"/>
    </location>
</feature>
<feature type="glycosylation site" description="N-linked (GlcNAc...) asparagine" evidence="8">
    <location>
        <position position="348"/>
    </location>
</feature>
<feature type="glycosylation site" description="N-linked (GlcNAc...) asparagine" evidence="1">
    <location>
        <position position="522"/>
    </location>
</feature>
<feature type="glycosylation site" description="N-linked (GlcNAc...) asparagine" evidence="6 8">
    <location>
        <position position="658"/>
    </location>
</feature>
<feature type="glycosylation site" description="N-linked (GlcNAc...) asparagine" evidence="8">
    <location>
        <position position="740"/>
    </location>
</feature>
<feature type="glycosylation site" description="N-linked (GlcNAc...) asparagine" evidence="1">
    <location>
        <position position="936"/>
    </location>
</feature>
<feature type="glycosylation site" description="N-linked (GlcNAc...) asparagine" evidence="6 8">
    <location>
        <position position="1077"/>
    </location>
</feature>
<feature type="glycosylation site" description="N-linked (GlcNAc...) asparagine" evidence="8">
    <location>
        <position position="1183"/>
    </location>
</feature>
<feature type="glycosylation site" description="N-linked (GlcNAc...) asparagine" evidence="6 8">
    <location>
        <position position="1226"/>
    </location>
</feature>
<feature type="glycosylation site" description="N-linked (GlcNAc...) asparagine" evidence="6 8">
    <location>
        <position position="1259"/>
    </location>
</feature>
<feature type="glycosylation site" description="N-linked (GlcNAc...) asparagine" evidence="1">
    <location>
        <position position="1336"/>
    </location>
</feature>
<feature type="glycosylation site" description="N-linked (GlcNAc...) asparagine" evidence="6 8">
    <location>
        <position position="1452"/>
    </location>
</feature>
<feature type="glycosylation site" description="N-linked (GlcNAc...) asparagine" evidence="1">
    <location>
        <position position="1528"/>
    </location>
</feature>
<feature type="disulfide bond" evidence="3">
    <location>
        <begin position="287"/>
        <end position="296"/>
    </location>
</feature>
<feature type="disulfide bond" evidence="3">
    <location>
        <begin position="289"/>
        <end position="310"/>
    </location>
</feature>
<feature type="disulfide bond" evidence="3">
    <location>
        <begin position="312"/>
        <end position="321"/>
    </location>
</feature>
<feature type="disulfide bond" evidence="3">
    <location>
        <begin position="324"/>
        <end position="344"/>
    </location>
</feature>
<feature type="disulfide bond" evidence="3">
    <location>
        <begin position="347"/>
        <end position="356"/>
    </location>
</feature>
<feature type="disulfide bond" evidence="3">
    <location>
        <begin position="349"/>
        <end position="372"/>
    </location>
</feature>
<feature type="disulfide bond" evidence="3">
    <location>
        <begin position="375"/>
        <end position="384"/>
    </location>
</feature>
<feature type="disulfide bond" evidence="3">
    <location>
        <begin position="387"/>
        <end position="400"/>
    </location>
</feature>
<feature type="disulfide bond" evidence="3">
    <location>
        <begin position="403"/>
        <end position="415"/>
    </location>
</feature>
<feature type="disulfide bond" evidence="3">
    <location>
        <begin position="405"/>
        <end position="421"/>
    </location>
</feature>
<feature type="disulfide bond" evidence="3">
    <location>
        <begin position="423"/>
        <end position="432"/>
    </location>
</feature>
<feature type="disulfide bond" evidence="3">
    <location>
        <begin position="435"/>
        <end position="447"/>
    </location>
</feature>
<feature type="disulfide bond" evidence="3">
    <location>
        <begin position="450"/>
        <end position="464"/>
    </location>
</feature>
<feature type="disulfide bond" evidence="3">
    <location>
        <begin position="452"/>
        <end position="471"/>
    </location>
</feature>
<feature type="disulfide bond" evidence="3">
    <location>
        <begin position="473"/>
        <end position="482"/>
    </location>
</feature>
<feature type="disulfide bond" evidence="3">
    <location>
        <begin position="485"/>
        <end position="500"/>
    </location>
</feature>
<feature type="disulfide bond" evidence="3">
    <location>
        <begin position="736"/>
        <end position="745"/>
    </location>
</feature>
<feature type="disulfide bond" evidence="3">
    <location>
        <begin position="738"/>
        <end position="752"/>
    </location>
</feature>
<feature type="disulfide bond" evidence="3">
    <location>
        <begin position="754"/>
        <end position="763"/>
    </location>
</feature>
<feature type="disulfide bond" evidence="3">
    <location>
        <begin position="766"/>
        <end position="782"/>
    </location>
</feature>
<feature type="disulfide bond" evidence="3">
    <location>
        <begin position="785"/>
        <end position="803"/>
    </location>
</feature>
<feature type="disulfide bond" evidence="3">
    <location>
        <begin position="806"/>
        <end position="815"/>
    </location>
</feature>
<feature type="disulfide bond" evidence="3">
    <location>
        <begin position="818"/>
        <end position="832"/>
    </location>
</feature>
<feature type="disulfide bond" evidence="3">
    <location>
        <begin position="835"/>
        <end position="849"/>
    </location>
</feature>
<feature type="disulfide bond" evidence="3">
    <location>
        <begin position="837"/>
        <end position="856"/>
    </location>
</feature>
<feature type="disulfide bond" evidence="3">
    <location>
        <begin position="859"/>
        <end position="868"/>
    </location>
</feature>
<feature type="disulfide bond" evidence="3">
    <location>
        <begin position="871"/>
        <end position="887"/>
    </location>
</feature>
<feature type="disulfide bond" evidence="3">
    <location>
        <begin position="890"/>
        <end position="909"/>
    </location>
</feature>
<feature type="disulfide bond" evidence="3">
    <location>
        <begin position="892"/>
        <end position="916"/>
    </location>
</feature>
<feature type="disulfide bond" evidence="3">
    <location>
        <begin position="918"/>
        <end position="927"/>
    </location>
</feature>
<feature type="disulfide bond" evidence="3">
    <location>
        <begin position="930"/>
        <end position="943"/>
    </location>
</feature>
<feature type="disulfide bond" evidence="3">
    <location>
        <begin position="946"/>
        <end position="958"/>
    </location>
</feature>
<feature type="disulfide bond" evidence="3">
    <location>
        <begin position="948"/>
        <end position="965"/>
    </location>
</feature>
<feature type="disulfide bond" evidence="3">
    <location>
        <begin position="967"/>
        <end position="976"/>
    </location>
</feature>
<feature type="disulfide bond" evidence="3">
    <location>
        <begin position="979"/>
        <end position="991"/>
    </location>
</feature>
<feature type="disulfide bond" evidence="3">
    <location>
        <begin position="994"/>
        <end position="1006"/>
    </location>
</feature>
<feature type="disulfide bond" evidence="3">
    <location>
        <begin position="996"/>
        <end position="1013"/>
    </location>
</feature>
<feature type="disulfide bond" evidence="3">
    <location>
        <begin position="1015"/>
        <end position="1024"/>
    </location>
</feature>
<feature type="disulfide bond" evidence="3">
    <location>
        <begin position="1027"/>
        <end position="1038"/>
    </location>
</feature>
<organism>
    <name type="scientific">Caenorhabditis elegans</name>
    <dbReference type="NCBI Taxonomy" id="6239"/>
    <lineage>
        <taxon>Eukaryota</taxon>
        <taxon>Metazoa</taxon>
        <taxon>Ecdysozoa</taxon>
        <taxon>Nematoda</taxon>
        <taxon>Chromadorea</taxon>
        <taxon>Rhabditida</taxon>
        <taxon>Rhabditina</taxon>
        <taxon>Rhabditomorpha</taxon>
        <taxon>Rhabditoidea</taxon>
        <taxon>Rhabditidae</taxon>
        <taxon>Peloderinae</taxon>
        <taxon>Caenorhabditis</taxon>
    </lineage>
</organism>
<reference key="1">
    <citation type="journal article" date="1998" name="Science">
        <title>Genome sequence of the nematode C. elegans: a platform for investigating biology.</title>
        <authorList>
            <consortium name="The C. elegans sequencing consortium"/>
        </authorList>
    </citation>
    <scope>NUCLEOTIDE SEQUENCE [LARGE SCALE GENOMIC DNA]</scope>
    <source>
        <strain>Bristol N2</strain>
    </source>
</reference>
<reference key="2">
    <citation type="journal article" date="2003" name="Nat. Biotechnol.">
        <title>Lectin affinity capture, isotope-coded tagging and mass spectrometry to identify N-linked glycoproteins.</title>
        <authorList>
            <person name="Kaji H."/>
            <person name="Saito H."/>
            <person name="Yamauchi Y."/>
            <person name="Shinkawa T."/>
            <person name="Taoka M."/>
            <person name="Hirabayashi J."/>
            <person name="Kasai K."/>
            <person name="Takahashi N."/>
            <person name="Isobe T."/>
        </authorList>
    </citation>
    <scope>GLYCOSYLATION [LARGE SCALE ANALYSIS] AT ASN-116</scope>
    <scope>IDENTIFICATION BY MASS SPECTROMETRY</scope>
    <source>
        <strain>Bristol N2</strain>
    </source>
</reference>
<reference key="3">
    <citation type="journal article" date="2005" name="Glycobiology">
        <title>Identification of the hydrophobic glycoproteins of Caenorhabditis elegans.</title>
        <authorList>
            <person name="Fan X."/>
            <person name="She Y.-M."/>
            <person name="Bagshaw R.D."/>
            <person name="Callahan J.W."/>
            <person name="Schachter H."/>
            <person name="Mahuran D.J."/>
        </authorList>
    </citation>
    <scope>GLYCOSYLATION [LARGE SCALE ANALYSIS] AT ASN-658; ASN-1077; ASN-1226; ASN-1259 AND ASN-1452</scope>
    <scope>IDENTIFICATION BY MASS SPECTROMETRY</scope>
</reference>
<reference key="4">
    <citation type="journal article" date="2006" name="Development">
        <title>FGF negatively regulates muscle membrane extension in Caenorhabditis elegans.</title>
        <authorList>
            <person name="Dixon S.J."/>
            <person name="Alexander M."/>
            <person name="Fernandes R."/>
            <person name="Ricker N."/>
            <person name="Roy P.J."/>
        </authorList>
    </citation>
    <scope>FUNCTION</scope>
    <scope>DISRUPTION PHENOTYPE</scope>
</reference>
<reference key="5">
    <citation type="journal article" date="2007" name="Mol. Cell. Proteomics">
        <title>Proteomics reveals N-linked glycoprotein diversity in Caenorhabditis elegans and suggests an atypical translocation mechanism for integral membrane proteins.</title>
        <authorList>
            <person name="Kaji H."/>
            <person name="Kamiie J."/>
            <person name="Kawakami H."/>
            <person name="Kido K."/>
            <person name="Yamauchi Y."/>
            <person name="Shinkawa T."/>
            <person name="Taoka M."/>
            <person name="Takahashi N."/>
            <person name="Isobe T."/>
        </authorList>
    </citation>
    <scope>GLYCOSYLATION [LARGE SCALE ANALYSIS] AT ASN-348; ASN-658; ASN-740; ASN-1077; ASN-1183; ASN-1226; ASN-1259 AND ASN-1452</scope>
    <scope>IDENTIFICATION BY MASS SPECTROMETRY</scope>
    <source>
        <strain>Bristol N2</strain>
    </source>
</reference>
<comment type="function">
    <text evidence="7">During the formation of neuromuscular junctions at the larval stage, negatively regulates membrane protrusion from body wall muscles, probably downstream of the integrin complex formed by pat-2 and pat-3.</text>
</comment>
<comment type="disruption phenotype">
    <text evidence="7">RNAi-mediated knockdown in L4 larval stage, causes ectopic membrane extensions from body wall muscles.</text>
</comment>
<evidence type="ECO:0000255" key="1"/>
<evidence type="ECO:0000255" key="2">
    <source>
        <dbReference type="PROSITE-ProRule" id="PRU00458"/>
    </source>
</evidence>
<evidence type="ECO:0000255" key="3">
    <source>
        <dbReference type="PROSITE-ProRule" id="PRU00460"/>
    </source>
</evidence>
<evidence type="ECO:0000255" key="4">
    <source>
        <dbReference type="PROSITE-ProRule" id="PRU00466"/>
    </source>
</evidence>
<evidence type="ECO:0000269" key="5">
    <source>
    </source>
</evidence>
<evidence type="ECO:0000269" key="6">
    <source>
    </source>
</evidence>
<evidence type="ECO:0000269" key="7">
    <source>
    </source>
</evidence>
<evidence type="ECO:0000269" key="8">
    <source>
    </source>
</evidence>
<name>LAM2_CAEEL</name>
<dbReference type="EMBL" id="FO080795">
    <property type="protein sequence ID" value="CCD66855.1"/>
    <property type="molecule type" value="Genomic_DNA"/>
</dbReference>
<dbReference type="PIR" id="T28811">
    <property type="entry name" value="T28811"/>
</dbReference>
<dbReference type="RefSeq" id="NP_509204.3">
    <property type="nucleotide sequence ID" value="NM_076803.5"/>
</dbReference>
<dbReference type="SMR" id="Q18823"/>
<dbReference type="BioGRID" id="45905">
    <property type="interactions" value="16"/>
</dbReference>
<dbReference type="FunCoup" id="Q18823">
    <property type="interactions" value="354"/>
</dbReference>
<dbReference type="IntAct" id="Q18823">
    <property type="interactions" value="1"/>
</dbReference>
<dbReference type="MINT" id="Q18823"/>
<dbReference type="STRING" id="6239.C54D1.5.1"/>
<dbReference type="GlyCosmos" id="Q18823">
    <property type="glycosylation" value="14 sites, No reported glycans"/>
</dbReference>
<dbReference type="iPTMnet" id="Q18823"/>
<dbReference type="PaxDb" id="6239-C54D1.5.1"/>
<dbReference type="PeptideAtlas" id="Q18823"/>
<dbReference type="EnsemblMetazoa" id="C54D1.5.1">
    <property type="protein sequence ID" value="C54D1.5.1"/>
    <property type="gene ID" value="WBGene00016913"/>
</dbReference>
<dbReference type="GeneID" id="180980"/>
<dbReference type="KEGG" id="cel:CELE_C54D1.5"/>
<dbReference type="UCSC" id="C54D1.5">
    <property type="organism name" value="c. elegans"/>
</dbReference>
<dbReference type="AGR" id="WB:WBGene00016913"/>
<dbReference type="CTD" id="180980"/>
<dbReference type="WormBase" id="C54D1.5">
    <property type="protein sequence ID" value="CE45033"/>
    <property type="gene ID" value="WBGene00016913"/>
    <property type="gene designation" value="lam-2"/>
</dbReference>
<dbReference type="eggNOG" id="KOG1836">
    <property type="taxonomic scope" value="Eukaryota"/>
</dbReference>
<dbReference type="GeneTree" id="ENSGT00940000169261"/>
<dbReference type="HOGENOM" id="CLU_002471_1_0_1"/>
<dbReference type="InParanoid" id="Q18823"/>
<dbReference type="OMA" id="GAQKTCT"/>
<dbReference type="OrthoDB" id="430826at2759"/>
<dbReference type="PhylomeDB" id="Q18823"/>
<dbReference type="PRO" id="PR:Q18823"/>
<dbReference type="Proteomes" id="UP000001940">
    <property type="component" value="Chromosome X"/>
</dbReference>
<dbReference type="Bgee" id="WBGene00016913">
    <property type="expression patterns" value="Expressed in pharyngeal muscle cell (C elegans) and 3 other cell types or tissues"/>
</dbReference>
<dbReference type="GO" id="GO:0005604">
    <property type="term" value="C:basement membrane"/>
    <property type="evidence" value="ECO:0000318"/>
    <property type="project" value="GO_Central"/>
</dbReference>
<dbReference type="GO" id="GO:0009887">
    <property type="term" value="P:animal organ morphogenesis"/>
    <property type="evidence" value="ECO:0000318"/>
    <property type="project" value="GO_Central"/>
</dbReference>
<dbReference type="GO" id="GO:0007411">
    <property type="term" value="P:axon guidance"/>
    <property type="evidence" value="ECO:0000318"/>
    <property type="project" value="GO_Central"/>
</dbReference>
<dbReference type="GO" id="GO:0040017">
    <property type="term" value="P:positive regulation of locomotion"/>
    <property type="evidence" value="ECO:0000315"/>
    <property type="project" value="WormBase"/>
</dbReference>
<dbReference type="GO" id="GO:0009888">
    <property type="term" value="P:tissue development"/>
    <property type="evidence" value="ECO:0000318"/>
    <property type="project" value="GO_Central"/>
</dbReference>
<dbReference type="CDD" id="cd00055">
    <property type="entry name" value="EGF_Lam"/>
    <property type="match status" value="8"/>
</dbReference>
<dbReference type="FunFam" id="2.10.25.10:FF:000242">
    <property type="entry name" value="Laminin subunit alpha 1"/>
    <property type="match status" value="1"/>
</dbReference>
<dbReference type="FunFam" id="2.10.25.10:FF:000051">
    <property type="entry name" value="Laminin subunit alpha 4"/>
    <property type="match status" value="1"/>
</dbReference>
<dbReference type="FunFam" id="2.10.25.10:FF:000067">
    <property type="entry name" value="Laminin subunit gamma 1"/>
    <property type="match status" value="2"/>
</dbReference>
<dbReference type="FunFam" id="2.10.25.10:FF:000193">
    <property type="entry name" value="Laminin subunit gamma 1"/>
    <property type="match status" value="1"/>
</dbReference>
<dbReference type="FunFam" id="2.60.120.260:FF:000018">
    <property type="entry name" value="Laminin subunit gamma 1"/>
    <property type="match status" value="1"/>
</dbReference>
<dbReference type="FunFam" id="2.10.25.10:FF:000105">
    <property type="entry name" value="laminin subunit gamma-1"/>
    <property type="match status" value="2"/>
</dbReference>
<dbReference type="FunFam" id="2.10.25.10:FF:000166">
    <property type="entry name" value="laminin subunit gamma-1"/>
    <property type="match status" value="1"/>
</dbReference>
<dbReference type="FunFam" id="2.10.25.10:FF:000615">
    <property type="entry name" value="Laminin subunit gamma-3"/>
    <property type="match status" value="1"/>
</dbReference>
<dbReference type="Gene3D" id="2.60.120.260">
    <property type="entry name" value="Galactose-binding domain-like"/>
    <property type="match status" value="1"/>
</dbReference>
<dbReference type="Gene3D" id="2.10.25.10">
    <property type="entry name" value="Laminin"/>
    <property type="match status" value="9"/>
</dbReference>
<dbReference type="InterPro" id="IPR000742">
    <property type="entry name" value="EGF-like_dom"/>
</dbReference>
<dbReference type="InterPro" id="IPR050440">
    <property type="entry name" value="Laminin/Netrin_ECM"/>
</dbReference>
<dbReference type="InterPro" id="IPR000034">
    <property type="entry name" value="Laminin_IV"/>
</dbReference>
<dbReference type="InterPro" id="IPR008211">
    <property type="entry name" value="Laminin_N"/>
</dbReference>
<dbReference type="InterPro" id="IPR002049">
    <property type="entry name" value="LE_dom"/>
</dbReference>
<dbReference type="InterPro" id="IPR056863">
    <property type="entry name" value="LMN_ATRN_NET-like_EGF"/>
</dbReference>
<dbReference type="PANTHER" id="PTHR10574:SF435">
    <property type="entry name" value="LAMININ SUBUNIT GAMMA-1"/>
    <property type="match status" value="1"/>
</dbReference>
<dbReference type="PANTHER" id="PTHR10574">
    <property type="entry name" value="NETRIN/LAMININ-RELATED"/>
    <property type="match status" value="1"/>
</dbReference>
<dbReference type="Pfam" id="PF00053">
    <property type="entry name" value="EGF_laminin"/>
    <property type="match status" value="10"/>
</dbReference>
<dbReference type="Pfam" id="PF24973">
    <property type="entry name" value="EGF_LMN_ATRN"/>
    <property type="match status" value="1"/>
</dbReference>
<dbReference type="Pfam" id="PF00052">
    <property type="entry name" value="Laminin_B"/>
    <property type="match status" value="1"/>
</dbReference>
<dbReference type="Pfam" id="PF00055">
    <property type="entry name" value="Laminin_N"/>
    <property type="match status" value="1"/>
</dbReference>
<dbReference type="PRINTS" id="PR00011">
    <property type="entry name" value="EGFLAMININ"/>
</dbReference>
<dbReference type="SMART" id="SM00181">
    <property type="entry name" value="EGF"/>
    <property type="match status" value="8"/>
</dbReference>
<dbReference type="SMART" id="SM00180">
    <property type="entry name" value="EGF_Lam"/>
    <property type="match status" value="11"/>
</dbReference>
<dbReference type="SMART" id="SM00281">
    <property type="entry name" value="LamB"/>
    <property type="match status" value="1"/>
</dbReference>
<dbReference type="SMART" id="SM00136">
    <property type="entry name" value="LamNT"/>
    <property type="match status" value="1"/>
</dbReference>
<dbReference type="SUPFAM" id="SSF57196">
    <property type="entry name" value="EGF/Laminin"/>
    <property type="match status" value="10"/>
</dbReference>
<dbReference type="PROSITE" id="PS00022">
    <property type="entry name" value="EGF_1"/>
    <property type="match status" value="8"/>
</dbReference>
<dbReference type="PROSITE" id="PS01186">
    <property type="entry name" value="EGF_2"/>
    <property type="match status" value="1"/>
</dbReference>
<dbReference type="PROSITE" id="PS01248">
    <property type="entry name" value="EGF_LAM_1"/>
    <property type="match status" value="11"/>
</dbReference>
<dbReference type="PROSITE" id="PS50027">
    <property type="entry name" value="EGF_LAM_2"/>
    <property type="match status" value="10"/>
</dbReference>
<dbReference type="PROSITE" id="PS51115">
    <property type="entry name" value="LAMININ_IVA"/>
    <property type="match status" value="1"/>
</dbReference>
<dbReference type="PROSITE" id="PS51117">
    <property type="entry name" value="LAMININ_NTER"/>
    <property type="match status" value="1"/>
</dbReference>
<accession>Q18823</accession>
<keyword id="KW-1015">Disulfide bond</keyword>
<keyword id="KW-0325">Glycoprotein</keyword>
<keyword id="KW-0424">Laminin EGF-like domain</keyword>
<keyword id="KW-1185">Reference proteome</keyword>
<keyword id="KW-0677">Repeat</keyword>
<keyword id="KW-0732">Signal</keyword>